<feature type="chain" id="PRO_0000082616" description="Ubiquitin-fold modifier-conjugating enzyme 1">
    <location>
        <begin position="1"/>
        <end position="162"/>
    </location>
</feature>
<feature type="active site" description="Glycyl thioester intermediate" evidence="1">
    <location>
        <position position="115"/>
    </location>
</feature>
<dbReference type="EMBL" id="Z19154">
    <property type="protein sequence ID" value="CAA79557.1"/>
    <property type="molecule type" value="Genomic_DNA"/>
</dbReference>
<dbReference type="PIR" id="S28301">
    <property type="entry name" value="S28301"/>
</dbReference>
<dbReference type="RefSeq" id="NP_499055.1">
    <property type="nucleotide sequence ID" value="NM_066654.7"/>
</dbReference>
<dbReference type="SMR" id="Q03598"/>
<dbReference type="BioGRID" id="41511">
    <property type="interactions" value="12"/>
</dbReference>
<dbReference type="DIP" id="DIP-26698N"/>
<dbReference type="FunCoup" id="Q03598">
    <property type="interactions" value="2285"/>
</dbReference>
<dbReference type="IntAct" id="Q03598">
    <property type="interactions" value="2"/>
</dbReference>
<dbReference type="STRING" id="6239.C40H1.6.1"/>
<dbReference type="PaxDb" id="6239-C40H1.6.2"/>
<dbReference type="PeptideAtlas" id="Q03598"/>
<dbReference type="EnsemblMetazoa" id="C40H1.6.1">
    <property type="protein sequence ID" value="C40H1.6.1"/>
    <property type="gene ID" value="WBGene00008041"/>
</dbReference>
<dbReference type="GeneID" id="176313"/>
<dbReference type="KEGG" id="cel:CELE_C40H1.6"/>
<dbReference type="UCSC" id="C40H1.6">
    <property type="organism name" value="c. elegans"/>
</dbReference>
<dbReference type="AGR" id="WB:WBGene00008041"/>
<dbReference type="CTD" id="176313"/>
<dbReference type="WormBase" id="C40H1.6">
    <property type="protein sequence ID" value="CE00114"/>
    <property type="gene ID" value="WBGene00008041"/>
    <property type="gene designation" value="ufc-1"/>
</dbReference>
<dbReference type="eggNOG" id="KOG3357">
    <property type="taxonomic scope" value="Eukaryota"/>
</dbReference>
<dbReference type="GeneTree" id="ENSGT00390000008196"/>
<dbReference type="HOGENOM" id="CLU_101170_0_0_1"/>
<dbReference type="InParanoid" id="Q03598"/>
<dbReference type="OMA" id="LWQKNVP"/>
<dbReference type="OrthoDB" id="10256182at2759"/>
<dbReference type="PhylomeDB" id="Q03598"/>
<dbReference type="PRO" id="PR:Q03598"/>
<dbReference type="Proteomes" id="UP000001940">
    <property type="component" value="Chromosome III"/>
</dbReference>
<dbReference type="Bgee" id="WBGene00008041">
    <property type="expression patterns" value="Expressed in germ line (C elegans) and 4 other cell types or tissues"/>
</dbReference>
<dbReference type="GO" id="GO:0005737">
    <property type="term" value="C:cytoplasm"/>
    <property type="evidence" value="ECO:0007005"/>
    <property type="project" value="WormBase"/>
</dbReference>
<dbReference type="GO" id="GO:0055120">
    <property type="term" value="C:striated muscle dense body"/>
    <property type="evidence" value="ECO:0007005"/>
    <property type="project" value="WormBase"/>
</dbReference>
<dbReference type="GO" id="GO:0031624">
    <property type="term" value="F:ubiquitin conjugating enzyme binding"/>
    <property type="evidence" value="ECO:0000353"/>
    <property type="project" value="UniProtKB"/>
</dbReference>
<dbReference type="GO" id="GO:0061657">
    <property type="term" value="F:UFM1 conjugating enzyme activity"/>
    <property type="evidence" value="ECO:0007669"/>
    <property type="project" value="InterPro"/>
</dbReference>
<dbReference type="GO" id="GO:0071568">
    <property type="term" value="F:UFM1 transferase activity"/>
    <property type="evidence" value="ECO:0000318"/>
    <property type="project" value="GO_Central"/>
</dbReference>
<dbReference type="GO" id="GO:0071569">
    <property type="term" value="P:protein ufmylation"/>
    <property type="evidence" value="ECO:0007669"/>
    <property type="project" value="InterPro"/>
</dbReference>
<dbReference type="GO" id="GO:0034976">
    <property type="term" value="P:response to endoplasmic reticulum stress"/>
    <property type="evidence" value="ECO:0000318"/>
    <property type="project" value="GO_Central"/>
</dbReference>
<dbReference type="GO" id="GO:0061709">
    <property type="term" value="P:reticulophagy"/>
    <property type="evidence" value="ECO:0000318"/>
    <property type="project" value="GO_Central"/>
</dbReference>
<dbReference type="CDD" id="cd11686">
    <property type="entry name" value="UBCc_UFC1"/>
    <property type="match status" value="1"/>
</dbReference>
<dbReference type="FunFam" id="3.10.110.10:FF:000042">
    <property type="entry name" value="Ubiquitin-fold modifier-conjugating enzyme 1"/>
    <property type="match status" value="1"/>
</dbReference>
<dbReference type="Gene3D" id="3.10.110.10">
    <property type="entry name" value="Ubiquitin Conjugating Enzyme"/>
    <property type="match status" value="1"/>
</dbReference>
<dbReference type="InterPro" id="IPR016135">
    <property type="entry name" value="UBQ-conjugating_enzyme/RWD"/>
</dbReference>
<dbReference type="InterPro" id="IPR014806">
    <property type="entry name" value="Ufc1"/>
</dbReference>
<dbReference type="PANTHER" id="PTHR12921">
    <property type="entry name" value="UBIQUITIN-FOLD MODIFIER-CONJUGATING ENZYME 1"/>
    <property type="match status" value="1"/>
</dbReference>
<dbReference type="PANTHER" id="PTHR12921:SF0">
    <property type="entry name" value="UBIQUITIN-FOLD MODIFIER-CONJUGATING ENZYME 1"/>
    <property type="match status" value="1"/>
</dbReference>
<dbReference type="Pfam" id="PF08694">
    <property type="entry name" value="UFC1"/>
    <property type="match status" value="1"/>
</dbReference>
<dbReference type="PIRSF" id="PIRSF008716">
    <property type="entry name" value="DUF1782"/>
    <property type="match status" value="1"/>
</dbReference>
<dbReference type="SUPFAM" id="SSF54495">
    <property type="entry name" value="UBC-like"/>
    <property type="match status" value="1"/>
</dbReference>
<protein>
    <recommendedName>
        <fullName>Ubiquitin-fold modifier-conjugating enzyme 1</fullName>
        <shortName>Ufm1-conjugating enzyme 1</shortName>
    </recommendedName>
</protein>
<comment type="function">
    <text evidence="1 2">E2-like enzyme which forms an intermediate with ufm-1 (PubMed:23449979). The intermediate is formed via a thioester linkage (By similarity).</text>
</comment>
<comment type="subunit">
    <text evidence="2">Interacts with uba-5.</text>
</comment>
<comment type="tissue specificity">
    <text evidence="2">Expressed in the intestine.</text>
</comment>
<comment type="similarity">
    <text evidence="3">Belongs to the ubiquitin-conjugating enzyme family. UFC1 subfamily.</text>
</comment>
<sequence>MDDATKSSLKAIPLCKTKASPRDGDLWIERLKEEYEAIIAAVQNNKDCDRDWFQLESNERGTKWFGKCWYFHNMVKYEFDVEFDIPITYPVTAPEIALPELDGKTAKMYRGGKICLSEHFKPLWARNTPKFGIAHAFALGLGPWMAVEIPDLIEKGLIQPKA</sequence>
<evidence type="ECO:0000250" key="1">
    <source>
        <dbReference type="UniProtKB" id="Q9Y3C8"/>
    </source>
</evidence>
<evidence type="ECO:0000269" key="2">
    <source>
    </source>
</evidence>
<evidence type="ECO:0000305" key="3"/>
<evidence type="ECO:0000312" key="4">
    <source>
        <dbReference type="WormBase" id="C40H1.6"/>
    </source>
</evidence>
<organism>
    <name type="scientific">Caenorhabditis elegans</name>
    <dbReference type="NCBI Taxonomy" id="6239"/>
    <lineage>
        <taxon>Eukaryota</taxon>
        <taxon>Metazoa</taxon>
        <taxon>Ecdysozoa</taxon>
        <taxon>Nematoda</taxon>
        <taxon>Chromadorea</taxon>
        <taxon>Rhabditida</taxon>
        <taxon>Rhabditina</taxon>
        <taxon>Rhabditomorpha</taxon>
        <taxon>Rhabditoidea</taxon>
        <taxon>Rhabditidae</taxon>
        <taxon>Peloderinae</taxon>
        <taxon>Caenorhabditis</taxon>
    </lineage>
</organism>
<keyword id="KW-1185">Reference proteome</keyword>
<keyword id="KW-0833">Ubl conjugation pathway</keyword>
<gene>
    <name evidence="4" type="primary">ufc-1</name>
    <name evidence="4" type="ORF">C40H1.6</name>
</gene>
<name>UFC1_CAEEL</name>
<proteinExistence type="evidence at protein level"/>
<reference key="1">
    <citation type="journal article" date="1994" name="Nature">
        <title>2.2 Mb of contiguous nucleotide sequence from chromosome III of C. elegans.</title>
        <authorList>
            <person name="Wilson R."/>
            <person name="Ainscough R."/>
            <person name="Anderson K."/>
            <person name="Baynes C."/>
            <person name="Berks M."/>
            <person name="Bonfield J."/>
            <person name="Burton J."/>
            <person name="Connell M."/>
            <person name="Copsey T."/>
            <person name="Cooper J."/>
            <person name="Coulson A."/>
            <person name="Craxton M."/>
            <person name="Dear S."/>
            <person name="Du Z."/>
            <person name="Durbin R."/>
            <person name="Favello A."/>
            <person name="Fraser A."/>
            <person name="Fulton L."/>
            <person name="Gardner A."/>
            <person name="Green P."/>
            <person name="Hawkins T."/>
            <person name="Hillier L."/>
            <person name="Jier M."/>
            <person name="Johnston L."/>
            <person name="Jones M."/>
            <person name="Kershaw J."/>
            <person name="Kirsten J."/>
            <person name="Laisster N."/>
            <person name="Latreille P."/>
            <person name="Lightning J."/>
            <person name="Lloyd C."/>
            <person name="Mortimore B."/>
            <person name="O'Callaghan M."/>
            <person name="Parsons J."/>
            <person name="Percy C."/>
            <person name="Rifken L."/>
            <person name="Roopra A."/>
            <person name="Saunders D."/>
            <person name="Shownkeen R."/>
            <person name="Sims M."/>
            <person name="Smaldon N."/>
            <person name="Smith A."/>
            <person name="Smith M."/>
            <person name="Sonnhammer E."/>
            <person name="Staden R."/>
            <person name="Sulston J."/>
            <person name="Thierry-Mieg J."/>
            <person name="Thomas K."/>
            <person name="Vaudin M."/>
            <person name="Vaughan K."/>
            <person name="Waterston R."/>
            <person name="Watson A."/>
            <person name="Weinstock L."/>
            <person name="Wilkinson-Sproat J."/>
            <person name="Wohldman P."/>
        </authorList>
    </citation>
    <scope>NUCLEOTIDE SEQUENCE [LARGE SCALE GENOMIC DNA]</scope>
    <source>
        <strain>Bristol N2</strain>
    </source>
</reference>
<reference key="2">
    <citation type="journal article" date="1998" name="Science">
        <title>Genome sequence of the nematode C. elegans: a platform for investigating biology.</title>
        <authorList>
            <consortium name="The C. elegans sequencing consortium"/>
        </authorList>
    </citation>
    <scope>NUCLEOTIDE SEQUENCE [LARGE SCALE GENOMIC DNA]</scope>
    <source>
        <strain>Bristol N2</strain>
    </source>
</reference>
<reference key="3">
    <citation type="journal article" date="2013" name="J. Biol. Chem.">
        <title>The ubiquitin-fold modifier 1 (Ufm1) cascade of Caenorhabditis elegans.</title>
        <authorList>
            <person name="Hertel P."/>
            <person name="Daniel J."/>
            <person name="Stegehake D."/>
            <person name="Vaupel H."/>
            <person name="Kailayangiri S."/>
            <person name="Gruel C."/>
            <person name="Woltersdorf C."/>
            <person name="Liebau E."/>
        </authorList>
    </citation>
    <scope>FUNCTION</scope>
    <scope>INTERACTION WITH UBA-5</scope>
    <scope>TISSUE SPECIFICITY</scope>
</reference>
<accession>Q03598</accession>